<proteinExistence type="inferred from homology"/>
<accession>Q1D898</accession>
<protein>
    <recommendedName>
        <fullName evidence="1">Bifunctional purine biosynthesis protein PurH</fullName>
    </recommendedName>
    <domain>
        <recommendedName>
            <fullName evidence="1">Phosphoribosylaminoimidazolecarboxamide formyltransferase</fullName>
            <ecNumber evidence="1">2.1.2.3</ecNumber>
        </recommendedName>
        <alternativeName>
            <fullName evidence="1">AICAR transformylase</fullName>
        </alternativeName>
    </domain>
    <domain>
        <recommendedName>
            <fullName evidence="1">IMP cyclohydrolase</fullName>
            <ecNumber evidence="1">3.5.4.10</ecNumber>
        </recommendedName>
        <alternativeName>
            <fullName evidence="1">ATIC</fullName>
        </alternativeName>
        <alternativeName>
            <fullName evidence="1">IMP synthase</fullName>
        </alternativeName>
        <alternativeName>
            <fullName evidence="1">Inosinicase</fullName>
        </alternativeName>
    </domain>
</protein>
<feature type="chain" id="PRO_1000018916" description="Bifunctional purine biosynthesis protein PurH">
    <location>
        <begin position="1"/>
        <end position="514"/>
    </location>
</feature>
<feature type="domain" description="MGS-like" evidence="2">
    <location>
        <begin position="1"/>
        <end position="142"/>
    </location>
</feature>
<comment type="catalytic activity">
    <reaction evidence="1">
        <text>(6R)-10-formyltetrahydrofolate + 5-amino-1-(5-phospho-beta-D-ribosyl)imidazole-4-carboxamide = 5-formamido-1-(5-phospho-D-ribosyl)imidazole-4-carboxamide + (6S)-5,6,7,8-tetrahydrofolate</text>
        <dbReference type="Rhea" id="RHEA:22192"/>
        <dbReference type="ChEBI" id="CHEBI:57453"/>
        <dbReference type="ChEBI" id="CHEBI:58467"/>
        <dbReference type="ChEBI" id="CHEBI:58475"/>
        <dbReference type="ChEBI" id="CHEBI:195366"/>
        <dbReference type="EC" id="2.1.2.3"/>
    </reaction>
</comment>
<comment type="catalytic activity">
    <reaction evidence="1">
        <text>IMP + H2O = 5-formamido-1-(5-phospho-D-ribosyl)imidazole-4-carboxamide</text>
        <dbReference type="Rhea" id="RHEA:18445"/>
        <dbReference type="ChEBI" id="CHEBI:15377"/>
        <dbReference type="ChEBI" id="CHEBI:58053"/>
        <dbReference type="ChEBI" id="CHEBI:58467"/>
        <dbReference type="EC" id="3.5.4.10"/>
    </reaction>
</comment>
<comment type="pathway">
    <text evidence="1">Purine metabolism; IMP biosynthesis via de novo pathway; 5-formamido-1-(5-phospho-D-ribosyl)imidazole-4-carboxamide from 5-amino-1-(5-phospho-D-ribosyl)imidazole-4-carboxamide (10-formyl THF route): step 1/1.</text>
</comment>
<comment type="pathway">
    <text evidence="1">Purine metabolism; IMP biosynthesis via de novo pathway; IMP from 5-formamido-1-(5-phospho-D-ribosyl)imidazole-4-carboxamide: step 1/1.</text>
</comment>
<comment type="domain">
    <text evidence="1">The IMP cyclohydrolase activity resides in the N-terminal region.</text>
</comment>
<comment type="similarity">
    <text evidence="1">Belongs to the PurH family.</text>
</comment>
<sequence>MLALLSVSDKRGLVPFAQGLVRLGFRLLSTGGTLEALKGAGVPVNKVSEHTQSPEILGGRVKTLHPRIHGGILGRLELEADREEMKAHGIEPISLVAVNLYPFRQTVASGAAEPEVIEQIDIGGPAMVRASAKNFRHVSVVVDPDDYPAVLAELEQQKAVSEDTRRRLMRKAFAHTAAYDASISAWLSAQAGEPFPGELSLAFQKSQDLRYGENPHQRGAFYREHAAPQEPTVAFAKVLQGKELSYNNILDLDAALGLLLEFPEAPAAVIIKHNTPCGVAVDAALVKAYRTARAVDEVSAFGGIVALNREVDAATAQAMAETFLEAVIAPSYSPEALQVLATKKNLRLLEAGPALASPQARPRAQLDARSVSGGMLLMDRDSVEPPLSWKVVSKRAPTPEEEQAMRFAWKVCKHVKSNAIVFASGDQLLAQGGGQTNRVDSVRIAMQRGGAALRGSAVASDAFFPFRDGLDEAARAGATCVVQPGGSVRDAELIAAADEHGMAMVLTGVRHFRH</sequence>
<name>PUR9_MYXXD</name>
<keyword id="KW-0378">Hydrolase</keyword>
<keyword id="KW-0511">Multifunctional enzyme</keyword>
<keyword id="KW-0658">Purine biosynthesis</keyword>
<keyword id="KW-1185">Reference proteome</keyword>
<keyword id="KW-0808">Transferase</keyword>
<organism>
    <name type="scientific">Myxococcus xanthus (strain DK1622)</name>
    <dbReference type="NCBI Taxonomy" id="246197"/>
    <lineage>
        <taxon>Bacteria</taxon>
        <taxon>Pseudomonadati</taxon>
        <taxon>Myxococcota</taxon>
        <taxon>Myxococcia</taxon>
        <taxon>Myxococcales</taxon>
        <taxon>Cystobacterineae</taxon>
        <taxon>Myxococcaceae</taxon>
        <taxon>Myxococcus</taxon>
    </lineage>
</organism>
<dbReference type="EC" id="2.1.2.3" evidence="1"/>
<dbReference type="EC" id="3.5.4.10" evidence="1"/>
<dbReference type="EMBL" id="CP000113">
    <property type="protein sequence ID" value="ABF88926.1"/>
    <property type="molecule type" value="Genomic_DNA"/>
</dbReference>
<dbReference type="RefSeq" id="WP_011552974.1">
    <property type="nucleotide sequence ID" value="NC_008095.1"/>
</dbReference>
<dbReference type="SMR" id="Q1D898"/>
<dbReference type="STRING" id="246197.MXAN_2914"/>
<dbReference type="EnsemblBacteria" id="ABF88926">
    <property type="protein sequence ID" value="ABF88926"/>
    <property type="gene ID" value="MXAN_2914"/>
</dbReference>
<dbReference type="GeneID" id="41360282"/>
<dbReference type="KEGG" id="mxa:MXAN_2914"/>
<dbReference type="eggNOG" id="COG0138">
    <property type="taxonomic scope" value="Bacteria"/>
</dbReference>
<dbReference type="HOGENOM" id="CLU_016316_5_2_7"/>
<dbReference type="OrthoDB" id="9802065at2"/>
<dbReference type="UniPathway" id="UPA00074">
    <property type="reaction ID" value="UER00133"/>
</dbReference>
<dbReference type="UniPathway" id="UPA00074">
    <property type="reaction ID" value="UER00135"/>
</dbReference>
<dbReference type="Proteomes" id="UP000002402">
    <property type="component" value="Chromosome"/>
</dbReference>
<dbReference type="GO" id="GO:0005829">
    <property type="term" value="C:cytosol"/>
    <property type="evidence" value="ECO:0007669"/>
    <property type="project" value="TreeGrafter"/>
</dbReference>
<dbReference type="GO" id="GO:0003937">
    <property type="term" value="F:IMP cyclohydrolase activity"/>
    <property type="evidence" value="ECO:0007669"/>
    <property type="project" value="UniProtKB-UniRule"/>
</dbReference>
<dbReference type="GO" id="GO:0004643">
    <property type="term" value="F:phosphoribosylaminoimidazolecarboxamide formyltransferase activity"/>
    <property type="evidence" value="ECO:0007669"/>
    <property type="project" value="UniProtKB-UniRule"/>
</dbReference>
<dbReference type="GO" id="GO:0006189">
    <property type="term" value="P:'de novo' IMP biosynthetic process"/>
    <property type="evidence" value="ECO:0007669"/>
    <property type="project" value="UniProtKB-UniRule"/>
</dbReference>
<dbReference type="CDD" id="cd01421">
    <property type="entry name" value="IMPCH"/>
    <property type="match status" value="1"/>
</dbReference>
<dbReference type="FunFam" id="3.40.140.20:FF:000001">
    <property type="entry name" value="Bifunctional purine biosynthesis protein PurH"/>
    <property type="match status" value="1"/>
</dbReference>
<dbReference type="FunFam" id="3.40.140.20:FF:000002">
    <property type="entry name" value="Bifunctional purine biosynthesis protein PurH"/>
    <property type="match status" value="1"/>
</dbReference>
<dbReference type="FunFam" id="3.40.50.1380:FF:000001">
    <property type="entry name" value="Bifunctional purine biosynthesis protein PurH"/>
    <property type="match status" value="1"/>
</dbReference>
<dbReference type="Gene3D" id="3.40.140.20">
    <property type="match status" value="2"/>
</dbReference>
<dbReference type="Gene3D" id="3.40.50.1380">
    <property type="entry name" value="Methylglyoxal synthase-like domain"/>
    <property type="match status" value="1"/>
</dbReference>
<dbReference type="HAMAP" id="MF_00139">
    <property type="entry name" value="PurH"/>
    <property type="match status" value="1"/>
</dbReference>
<dbReference type="InterPro" id="IPR024051">
    <property type="entry name" value="AICAR_Tfase_dup_dom_sf"/>
</dbReference>
<dbReference type="InterPro" id="IPR016193">
    <property type="entry name" value="Cytidine_deaminase-like"/>
</dbReference>
<dbReference type="InterPro" id="IPR011607">
    <property type="entry name" value="MGS-like_dom"/>
</dbReference>
<dbReference type="InterPro" id="IPR036914">
    <property type="entry name" value="MGS-like_dom_sf"/>
</dbReference>
<dbReference type="InterPro" id="IPR002695">
    <property type="entry name" value="PurH-like"/>
</dbReference>
<dbReference type="NCBIfam" id="NF002049">
    <property type="entry name" value="PRK00881.1"/>
    <property type="match status" value="1"/>
</dbReference>
<dbReference type="NCBIfam" id="TIGR00355">
    <property type="entry name" value="purH"/>
    <property type="match status" value="1"/>
</dbReference>
<dbReference type="PANTHER" id="PTHR11692:SF0">
    <property type="entry name" value="BIFUNCTIONAL PURINE BIOSYNTHESIS PROTEIN ATIC"/>
    <property type="match status" value="1"/>
</dbReference>
<dbReference type="PANTHER" id="PTHR11692">
    <property type="entry name" value="BIFUNCTIONAL PURINE BIOSYNTHESIS PROTEIN PURH"/>
    <property type="match status" value="1"/>
</dbReference>
<dbReference type="Pfam" id="PF01808">
    <property type="entry name" value="AICARFT_IMPCHas"/>
    <property type="match status" value="1"/>
</dbReference>
<dbReference type="Pfam" id="PF02142">
    <property type="entry name" value="MGS"/>
    <property type="match status" value="1"/>
</dbReference>
<dbReference type="PIRSF" id="PIRSF000414">
    <property type="entry name" value="AICARFT_IMPCHas"/>
    <property type="match status" value="1"/>
</dbReference>
<dbReference type="SMART" id="SM00798">
    <property type="entry name" value="AICARFT_IMPCHas"/>
    <property type="match status" value="1"/>
</dbReference>
<dbReference type="SMART" id="SM00851">
    <property type="entry name" value="MGS"/>
    <property type="match status" value="1"/>
</dbReference>
<dbReference type="SUPFAM" id="SSF53927">
    <property type="entry name" value="Cytidine deaminase-like"/>
    <property type="match status" value="1"/>
</dbReference>
<dbReference type="SUPFAM" id="SSF52335">
    <property type="entry name" value="Methylglyoxal synthase-like"/>
    <property type="match status" value="1"/>
</dbReference>
<dbReference type="PROSITE" id="PS51855">
    <property type="entry name" value="MGS"/>
    <property type="match status" value="1"/>
</dbReference>
<reference key="1">
    <citation type="journal article" date="2006" name="Proc. Natl. Acad. Sci. U.S.A.">
        <title>Evolution of sensory complexity recorded in a myxobacterial genome.</title>
        <authorList>
            <person name="Goldman B.S."/>
            <person name="Nierman W.C."/>
            <person name="Kaiser D."/>
            <person name="Slater S.C."/>
            <person name="Durkin A.S."/>
            <person name="Eisen J.A."/>
            <person name="Ronning C.M."/>
            <person name="Barbazuk W.B."/>
            <person name="Blanchard M."/>
            <person name="Field C."/>
            <person name="Halling C."/>
            <person name="Hinkle G."/>
            <person name="Iartchuk O."/>
            <person name="Kim H.S."/>
            <person name="Mackenzie C."/>
            <person name="Madupu R."/>
            <person name="Miller N."/>
            <person name="Shvartsbeyn A."/>
            <person name="Sullivan S.A."/>
            <person name="Vaudin M."/>
            <person name="Wiegand R."/>
            <person name="Kaplan H.B."/>
        </authorList>
    </citation>
    <scope>NUCLEOTIDE SEQUENCE [LARGE SCALE GENOMIC DNA]</scope>
    <source>
        <strain>DK1622</strain>
    </source>
</reference>
<evidence type="ECO:0000255" key="1">
    <source>
        <dbReference type="HAMAP-Rule" id="MF_00139"/>
    </source>
</evidence>
<evidence type="ECO:0000255" key="2">
    <source>
        <dbReference type="PROSITE-ProRule" id="PRU01202"/>
    </source>
</evidence>
<gene>
    <name evidence="1" type="primary">purH</name>
    <name type="ordered locus">MXAN_2914</name>
</gene>